<comment type="function">
    <text evidence="1">Part of the ABC transporter complex CcmAB involved in the biogenesis of c-type cytochromes; once thought to export heme, this seems not to be the case, but its exact role is uncertain. Responsible for energy coupling to the transport system.</text>
</comment>
<comment type="catalytic activity">
    <reaction evidence="1">
        <text>heme b(in) + ATP + H2O = heme b(out) + ADP + phosphate + H(+)</text>
        <dbReference type="Rhea" id="RHEA:19261"/>
        <dbReference type="ChEBI" id="CHEBI:15377"/>
        <dbReference type="ChEBI" id="CHEBI:15378"/>
        <dbReference type="ChEBI" id="CHEBI:30616"/>
        <dbReference type="ChEBI" id="CHEBI:43474"/>
        <dbReference type="ChEBI" id="CHEBI:60344"/>
        <dbReference type="ChEBI" id="CHEBI:456216"/>
        <dbReference type="EC" id="7.6.2.5"/>
    </reaction>
</comment>
<comment type="subunit">
    <text evidence="1">The complex is composed of two ATP-binding proteins (CcmA) and two transmembrane proteins (CcmB).</text>
</comment>
<comment type="subcellular location">
    <subcellularLocation>
        <location evidence="1">Cell inner membrane</location>
        <topology evidence="1">Peripheral membrane protein</topology>
    </subcellularLocation>
</comment>
<comment type="similarity">
    <text evidence="1">Belongs to the ABC transporter superfamily. CcmA exporter (TC 3.A.1.107) family.</text>
</comment>
<keyword id="KW-0067">ATP-binding</keyword>
<keyword id="KW-0997">Cell inner membrane</keyword>
<keyword id="KW-1003">Cell membrane</keyword>
<keyword id="KW-0201">Cytochrome c-type biogenesis</keyword>
<keyword id="KW-0472">Membrane</keyword>
<keyword id="KW-0547">Nucleotide-binding</keyword>
<keyword id="KW-1185">Reference proteome</keyword>
<keyword id="KW-1278">Translocase</keyword>
<keyword id="KW-0813">Transport</keyword>
<sequence length="212" mass="24009">MFEQHKLSLQNLSCQRGERVLFRALTCDFNSGDFVQIEGHNGIGKTSLLRILAGLVRPLEGEVRWDSEAISKQREQYHQNLLYLGHLSGVKPELTAWENLQFYQRISQAEQNTDMLWDLLEKVGLLGREDLPAAQLSAGQQKRIALGRLWLSQAPLWILDEPFTAIDKKGVEILTALFDEHAQRGGIVLLTSHQEVPSSHLQKLNLAAYKAE</sequence>
<protein>
    <recommendedName>
        <fullName evidence="1">Cytochrome c biogenesis ATP-binding export protein CcmA</fullName>
        <ecNumber evidence="1">7.6.2.5</ecNumber>
    </recommendedName>
    <alternativeName>
        <fullName evidence="1">Heme exporter protein A</fullName>
    </alternativeName>
</protein>
<organism>
    <name type="scientific">Haemophilus influenzae (strain ATCC 51907 / DSM 11121 / KW20 / Rd)</name>
    <dbReference type="NCBI Taxonomy" id="71421"/>
    <lineage>
        <taxon>Bacteria</taxon>
        <taxon>Pseudomonadati</taxon>
        <taxon>Pseudomonadota</taxon>
        <taxon>Gammaproteobacteria</taxon>
        <taxon>Pasteurellales</taxon>
        <taxon>Pasteurellaceae</taxon>
        <taxon>Haemophilus</taxon>
    </lineage>
</organism>
<feature type="chain" id="PRO_0000092182" description="Cytochrome c biogenesis ATP-binding export protein CcmA">
    <location>
        <begin position="1"/>
        <end position="212"/>
    </location>
</feature>
<feature type="domain" description="ABC transporter" evidence="1">
    <location>
        <begin position="7"/>
        <end position="209"/>
    </location>
</feature>
<feature type="binding site" evidence="1">
    <location>
        <begin position="39"/>
        <end position="46"/>
    </location>
    <ligand>
        <name>ATP</name>
        <dbReference type="ChEBI" id="CHEBI:30616"/>
    </ligand>
</feature>
<gene>
    <name evidence="1" type="primary">ccmA</name>
    <name type="ordered locus">HI_1089</name>
</gene>
<evidence type="ECO:0000255" key="1">
    <source>
        <dbReference type="HAMAP-Rule" id="MF_01707"/>
    </source>
</evidence>
<proteinExistence type="inferred from homology"/>
<reference key="1">
    <citation type="journal article" date="1995" name="Science">
        <title>Whole-genome random sequencing and assembly of Haemophilus influenzae Rd.</title>
        <authorList>
            <person name="Fleischmann R.D."/>
            <person name="Adams M.D."/>
            <person name="White O."/>
            <person name="Clayton R.A."/>
            <person name="Kirkness E.F."/>
            <person name="Kerlavage A.R."/>
            <person name="Bult C.J."/>
            <person name="Tomb J.-F."/>
            <person name="Dougherty B.A."/>
            <person name="Merrick J.M."/>
            <person name="McKenney K."/>
            <person name="Sutton G.G."/>
            <person name="FitzHugh W."/>
            <person name="Fields C.A."/>
            <person name="Gocayne J.D."/>
            <person name="Scott J.D."/>
            <person name="Shirley R."/>
            <person name="Liu L.-I."/>
            <person name="Glodek A."/>
            <person name="Kelley J.M."/>
            <person name="Weidman J.F."/>
            <person name="Phillips C.A."/>
            <person name="Spriggs T."/>
            <person name="Hedblom E."/>
            <person name="Cotton M.D."/>
            <person name="Utterback T.R."/>
            <person name="Hanna M.C."/>
            <person name="Nguyen D.T."/>
            <person name="Saudek D.M."/>
            <person name="Brandon R.C."/>
            <person name="Fine L.D."/>
            <person name="Fritchman J.L."/>
            <person name="Fuhrmann J.L."/>
            <person name="Geoghagen N.S.M."/>
            <person name="Gnehm C.L."/>
            <person name="McDonald L.A."/>
            <person name="Small K.V."/>
            <person name="Fraser C.M."/>
            <person name="Smith H.O."/>
            <person name="Venter J.C."/>
        </authorList>
    </citation>
    <scope>NUCLEOTIDE SEQUENCE [LARGE SCALE GENOMIC DNA]</scope>
    <source>
        <strain>ATCC 51907 / DSM 11121 / KW20 / Rd</strain>
    </source>
</reference>
<dbReference type="EC" id="7.6.2.5" evidence="1"/>
<dbReference type="EMBL" id="L42023">
    <property type="protein sequence ID" value="AAC22746.1"/>
    <property type="molecule type" value="Genomic_DNA"/>
</dbReference>
<dbReference type="PIR" id="E64166">
    <property type="entry name" value="E64166"/>
</dbReference>
<dbReference type="RefSeq" id="NP_439246.1">
    <property type="nucleotide sequence ID" value="NC_000907.1"/>
</dbReference>
<dbReference type="SMR" id="P45032"/>
<dbReference type="STRING" id="71421.HI_1089"/>
<dbReference type="EnsemblBacteria" id="AAC22746">
    <property type="protein sequence ID" value="AAC22746"/>
    <property type="gene ID" value="HI_1089"/>
</dbReference>
<dbReference type="KEGG" id="hin:HI_1089"/>
<dbReference type="PATRIC" id="fig|71421.8.peg.1134"/>
<dbReference type="eggNOG" id="COG4133">
    <property type="taxonomic scope" value="Bacteria"/>
</dbReference>
<dbReference type="HOGENOM" id="CLU_000604_1_2_6"/>
<dbReference type="OrthoDB" id="9800654at2"/>
<dbReference type="PhylomeDB" id="P45032"/>
<dbReference type="BioCyc" id="HINF71421:G1GJ1-1124-MONOMER"/>
<dbReference type="Proteomes" id="UP000000579">
    <property type="component" value="Chromosome"/>
</dbReference>
<dbReference type="GO" id="GO:0005886">
    <property type="term" value="C:plasma membrane"/>
    <property type="evidence" value="ECO:0007669"/>
    <property type="project" value="UniProtKB-SubCell"/>
</dbReference>
<dbReference type="GO" id="GO:0015439">
    <property type="term" value="F:ABC-type heme transporter activity"/>
    <property type="evidence" value="ECO:0007669"/>
    <property type="project" value="UniProtKB-EC"/>
</dbReference>
<dbReference type="GO" id="GO:0005524">
    <property type="term" value="F:ATP binding"/>
    <property type="evidence" value="ECO:0007669"/>
    <property type="project" value="UniProtKB-KW"/>
</dbReference>
<dbReference type="GO" id="GO:0016887">
    <property type="term" value="F:ATP hydrolysis activity"/>
    <property type="evidence" value="ECO:0007669"/>
    <property type="project" value="InterPro"/>
</dbReference>
<dbReference type="GO" id="GO:0017004">
    <property type="term" value="P:cytochrome complex assembly"/>
    <property type="evidence" value="ECO:0007669"/>
    <property type="project" value="UniProtKB-KW"/>
</dbReference>
<dbReference type="Gene3D" id="3.40.50.300">
    <property type="entry name" value="P-loop containing nucleotide triphosphate hydrolases"/>
    <property type="match status" value="1"/>
</dbReference>
<dbReference type="InterPro" id="IPR003593">
    <property type="entry name" value="AAA+_ATPase"/>
</dbReference>
<dbReference type="InterPro" id="IPR003439">
    <property type="entry name" value="ABC_transporter-like_ATP-bd"/>
</dbReference>
<dbReference type="InterPro" id="IPR017871">
    <property type="entry name" value="ABC_transporter-like_CS"/>
</dbReference>
<dbReference type="InterPro" id="IPR005895">
    <property type="entry name" value="ABC_transptr_haem_export_CcmA"/>
</dbReference>
<dbReference type="InterPro" id="IPR027417">
    <property type="entry name" value="P-loop_NTPase"/>
</dbReference>
<dbReference type="NCBIfam" id="TIGR01189">
    <property type="entry name" value="ccmA"/>
    <property type="match status" value="1"/>
</dbReference>
<dbReference type="NCBIfam" id="NF010061">
    <property type="entry name" value="PRK13538.1"/>
    <property type="match status" value="1"/>
</dbReference>
<dbReference type="PANTHER" id="PTHR43499">
    <property type="entry name" value="ABC TRANSPORTER I FAMILY MEMBER 1"/>
    <property type="match status" value="1"/>
</dbReference>
<dbReference type="PANTHER" id="PTHR43499:SF1">
    <property type="entry name" value="ABC TRANSPORTER I FAMILY MEMBER 1"/>
    <property type="match status" value="1"/>
</dbReference>
<dbReference type="Pfam" id="PF00005">
    <property type="entry name" value="ABC_tran"/>
    <property type="match status" value="1"/>
</dbReference>
<dbReference type="SMART" id="SM00382">
    <property type="entry name" value="AAA"/>
    <property type="match status" value="1"/>
</dbReference>
<dbReference type="SUPFAM" id="SSF52540">
    <property type="entry name" value="P-loop containing nucleoside triphosphate hydrolases"/>
    <property type="match status" value="1"/>
</dbReference>
<dbReference type="PROSITE" id="PS00211">
    <property type="entry name" value="ABC_TRANSPORTER_1"/>
    <property type="match status" value="1"/>
</dbReference>
<dbReference type="PROSITE" id="PS50893">
    <property type="entry name" value="ABC_TRANSPORTER_2"/>
    <property type="match status" value="1"/>
</dbReference>
<dbReference type="PROSITE" id="PS51243">
    <property type="entry name" value="CCMA"/>
    <property type="match status" value="1"/>
</dbReference>
<name>CCMA_HAEIN</name>
<accession>P45032</accession>